<feature type="chain" id="PRO_0000155923" description="Ribonuclease Z">
    <location>
        <begin position="1"/>
        <end position="305"/>
    </location>
</feature>
<feature type="active site" description="Proton acceptor" evidence="1">
    <location>
        <position position="65"/>
    </location>
</feature>
<feature type="binding site" evidence="1">
    <location>
        <position position="61"/>
    </location>
    <ligand>
        <name>Zn(2+)</name>
        <dbReference type="ChEBI" id="CHEBI:29105"/>
        <label>1</label>
        <note>catalytic</note>
    </ligand>
</feature>
<feature type="binding site" evidence="1">
    <location>
        <position position="63"/>
    </location>
    <ligand>
        <name>Zn(2+)</name>
        <dbReference type="ChEBI" id="CHEBI:29105"/>
        <label>1</label>
        <note>catalytic</note>
    </ligand>
</feature>
<feature type="binding site" evidence="1">
    <location>
        <position position="65"/>
    </location>
    <ligand>
        <name>Zn(2+)</name>
        <dbReference type="ChEBI" id="CHEBI:29105"/>
        <label>2</label>
        <note>catalytic</note>
    </ligand>
</feature>
<feature type="binding site" evidence="1">
    <location>
        <position position="66"/>
    </location>
    <ligand>
        <name>Zn(2+)</name>
        <dbReference type="ChEBI" id="CHEBI:29105"/>
        <label>2</label>
        <note>catalytic</note>
    </ligand>
</feature>
<feature type="binding site" evidence="1">
    <location>
        <position position="138"/>
    </location>
    <ligand>
        <name>Zn(2+)</name>
        <dbReference type="ChEBI" id="CHEBI:29105"/>
        <label>1</label>
        <note>catalytic</note>
    </ligand>
</feature>
<feature type="binding site" evidence="1">
    <location>
        <position position="208"/>
    </location>
    <ligand>
        <name>Zn(2+)</name>
        <dbReference type="ChEBI" id="CHEBI:29105"/>
        <label>1</label>
        <note>catalytic</note>
    </ligand>
</feature>
<feature type="binding site" evidence="1">
    <location>
        <position position="208"/>
    </location>
    <ligand>
        <name>Zn(2+)</name>
        <dbReference type="ChEBI" id="CHEBI:29105"/>
        <label>2</label>
        <note>catalytic</note>
    </ligand>
</feature>
<feature type="binding site" evidence="1">
    <location>
        <position position="266"/>
    </location>
    <ligand>
        <name>Zn(2+)</name>
        <dbReference type="ChEBI" id="CHEBI:29105"/>
        <label>2</label>
        <note>catalytic</note>
    </ligand>
</feature>
<keyword id="KW-0255">Endonuclease</keyword>
<keyword id="KW-0378">Hydrolase</keyword>
<keyword id="KW-0479">Metal-binding</keyword>
<keyword id="KW-0540">Nuclease</keyword>
<keyword id="KW-1185">Reference proteome</keyword>
<keyword id="KW-0819">tRNA processing</keyword>
<keyword id="KW-0862">Zinc</keyword>
<organism>
    <name type="scientific">Methanosarcina acetivorans (strain ATCC 35395 / DSM 2834 / JCM 12185 / C2A)</name>
    <dbReference type="NCBI Taxonomy" id="188937"/>
    <lineage>
        <taxon>Archaea</taxon>
        <taxon>Methanobacteriati</taxon>
        <taxon>Methanobacteriota</taxon>
        <taxon>Stenosarchaea group</taxon>
        <taxon>Methanomicrobia</taxon>
        <taxon>Methanosarcinales</taxon>
        <taxon>Methanosarcinaceae</taxon>
        <taxon>Methanosarcina</taxon>
    </lineage>
</organism>
<reference key="1">
    <citation type="journal article" date="2002" name="Genome Res.">
        <title>The genome of Methanosarcina acetivorans reveals extensive metabolic and physiological diversity.</title>
        <authorList>
            <person name="Galagan J.E."/>
            <person name="Nusbaum C."/>
            <person name="Roy A."/>
            <person name="Endrizzi M.G."/>
            <person name="Macdonald P."/>
            <person name="FitzHugh W."/>
            <person name="Calvo S."/>
            <person name="Engels R."/>
            <person name="Smirnov S."/>
            <person name="Atnoor D."/>
            <person name="Brown A."/>
            <person name="Allen N."/>
            <person name="Naylor J."/>
            <person name="Stange-Thomann N."/>
            <person name="DeArellano K."/>
            <person name="Johnson R."/>
            <person name="Linton L."/>
            <person name="McEwan P."/>
            <person name="McKernan K."/>
            <person name="Talamas J."/>
            <person name="Tirrell A."/>
            <person name="Ye W."/>
            <person name="Zimmer A."/>
            <person name="Barber R.D."/>
            <person name="Cann I."/>
            <person name="Graham D.E."/>
            <person name="Grahame D.A."/>
            <person name="Guss A.M."/>
            <person name="Hedderich R."/>
            <person name="Ingram-Smith C."/>
            <person name="Kuettner H.C."/>
            <person name="Krzycki J.A."/>
            <person name="Leigh J.A."/>
            <person name="Li W."/>
            <person name="Liu J."/>
            <person name="Mukhopadhyay B."/>
            <person name="Reeve J.N."/>
            <person name="Smith K."/>
            <person name="Springer T.A."/>
            <person name="Umayam L.A."/>
            <person name="White O."/>
            <person name="White R.H."/>
            <person name="de Macario E.C."/>
            <person name="Ferry J.G."/>
            <person name="Jarrell K.F."/>
            <person name="Jing H."/>
            <person name="Macario A.J.L."/>
            <person name="Paulsen I.T."/>
            <person name="Pritchett M."/>
            <person name="Sowers K.R."/>
            <person name="Swanson R.V."/>
            <person name="Zinder S.H."/>
            <person name="Lander E."/>
            <person name="Metcalf W.W."/>
            <person name="Birren B."/>
        </authorList>
    </citation>
    <scope>NUCLEOTIDE SEQUENCE [LARGE SCALE GENOMIC DNA]</scope>
    <source>
        <strain>ATCC 35395 / DSM 2834 / JCM 12185 / C2A</strain>
    </source>
</reference>
<gene>
    <name evidence="1" type="primary">rnz</name>
    <name type="ordered locus">MA_3031</name>
</gene>
<evidence type="ECO:0000255" key="1">
    <source>
        <dbReference type="HAMAP-Rule" id="MF_01818"/>
    </source>
</evidence>
<dbReference type="EC" id="3.1.26.11" evidence="1"/>
<dbReference type="EMBL" id="AE010299">
    <property type="protein sequence ID" value="AAM06404.1"/>
    <property type="molecule type" value="Genomic_DNA"/>
</dbReference>
<dbReference type="RefSeq" id="WP_011022970.1">
    <property type="nucleotide sequence ID" value="NC_003552.1"/>
</dbReference>
<dbReference type="SMR" id="Q8TLK5"/>
<dbReference type="FunCoup" id="Q8TLK5">
    <property type="interactions" value="136"/>
</dbReference>
<dbReference type="STRING" id="188937.MA_3031"/>
<dbReference type="EnsemblBacteria" id="AAM06404">
    <property type="protein sequence ID" value="AAM06404"/>
    <property type="gene ID" value="MA_3031"/>
</dbReference>
<dbReference type="GeneID" id="1474925"/>
<dbReference type="KEGG" id="mac:MA_3031"/>
<dbReference type="HOGENOM" id="CLU_031317_2_1_2"/>
<dbReference type="InParanoid" id="Q8TLK5"/>
<dbReference type="OrthoDB" id="85118at2157"/>
<dbReference type="PhylomeDB" id="Q8TLK5"/>
<dbReference type="Proteomes" id="UP000002487">
    <property type="component" value="Chromosome"/>
</dbReference>
<dbReference type="GO" id="GO:0042781">
    <property type="term" value="F:3'-tRNA processing endoribonuclease activity"/>
    <property type="evidence" value="ECO:0000318"/>
    <property type="project" value="GO_Central"/>
</dbReference>
<dbReference type="GO" id="GO:0008270">
    <property type="term" value="F:zinc ion binding"/>
    <property type="evidence" value="ECO:0007669"/>
    <property type="project" value="UniProtKB-UniRule"/>
</dbReference>
<dbReference type="CDD" id="cd07717">
    <property type="entry name" value="RNaseZ_ZiPD-like_MBL-fold"/>
    <property type="match status" value="1"/>
</dbReference>
<dbReference type="FunFam" id="3.60.15.10:FF:000002">
    <property type="entry name" value="Ribonuclease Z"/>
    <property type="match status" value="1"/>
</dbReference>
<dbReference type="Gene3D" id="3.60.15.10">
    <property type="entry name" value="Ribonuclease Z/Hydroxyacylglutathione hydrolase-like"/>
    <property type="match status" value="1"/>
</dbReference>
<dbReference type="HAMAP" id="MF_01818">
    <property type="entry name" value="RNase_Z_BN"/>
    <property type="match status" value="1"/>
</dbReference>
<dbReference type="InterPro" id="IPR001279">
    <property type="entry name" value="Metallo-B-lactamas"/>
</dbReference>
<dbReference type="InterPro" id="IPR036866">
    <property type="entry name" value="RibonucZ/Hydroxyglut_hydro"/>
</dbReference>
<dbReference type="InterPro" id="IPR013471">
    <property type="entry name" value="RNase_Z/BN"/>
</dbReference>
<dbReference type="NCBIfam" id="NF000801">
    <property type="entry name" value="PRK00055.1-3"/>
    <property type="match status" value="1"/>
</dbReference>
<dbReference type="NCBIfam" id="TIGR02651">
    <property type="entry name" value="RNase_Z"/>
    <property type="match status" value="1"/>
</dbReference>
<dbReference type="PANTHER" id="PTHR46018">
    <property type="entry name" value="ZINC PHOSPHODIESTERASE ELAC PROTEIN 1"/>
    <property type="match status" value="1"/>
</dbReference>
<dbReference type="PANTHER" id="PTHR46018:SF2">
    <property type="entry name" value="ZINC PHOSPHODIESTERASE ELAC PROTEIN 1"/>
    <property type="match status" value="1"/>
</dbReference>
<dbReference type="Pfam" id="PF12706">
    <property type="entry name" value="Lactamase_B_2"/>
    <property type="match status" value="2"/>
</dbReference>
<dbReference type="SMART" id="SM00849">
    <property type="entry name" value="Lactamase_B"/>
    <property type="match status" value="1"/>
</dbReference>
<dbReference type="SUPFAM" id="SSF56281">
    <property type="entry name" value="Metallo-hydrolase/oxidoreductase"/>
    <property type="match status" value="1"/>
</dbReference>
<accession>Q8TLK5</accession>
<sequence>MLRITFLGTGGSLPTRNRNPSAVMINREGELMLFDCGEGTQQQMMRAKTGMMSLSSIFVSHFHADHFLGIPGLIQTMSFMGRKDPLMIYGPAGTREFTELFKALGYFNLKYEIHGMELKPGDVVEGEGYVVRALETEHSTPSLGYALIENPRPGRFNREKAVALGVPPGPLFSKLQKGNPVEAGGKVVRPEEVMGTPRPGRTIVYSGDTRPCEAVLEASRDADLLIHDGSFADEMAEWAEESMHSTAGEVAALAKEAGVRKLVLTHISSRYTDDVEPILKDSKKVFENVIVAEDLMELEIPYRPE</sequence>
<proteinExistence type="inferred from homology"/>
<comment type="function">
    <text evidence="1">Zinc phosphodiesterase, which displays some tRNA 3'-processing endonuclease activity. Probably involved in tRNA maturation, by removing a 3'-trailer from precursor tRNA.</text>
</comment>
<comment type="catalytic activity">
    <reaction evidence="1">
        <text>Endonucleolytic cleavage of RNA, removing extra 3' nucleotides from tRNA precursor, generating 3' termini of tRNAs. A 3'-hydroxy group is left at the tRNA terminus and a 5'-phosphoryl group is left at the trailer molecule.</text>
        <dbReference type="EC" id="3.1.26.11"/>
    </reaction>
</comment>
<comment type="cofactor">
    <cofactor evidence="1">
        <name>Zn(2+)</name>
        <dbReference type="ChEBI" id="CHEBI:29105"/>
    </cofactor>
    <text evidence="1">Binds 2 Zn(2+) ions.</text>
</comment>
<comment type="subunit">
    <text evidence="1">Homodimer.</text>
</comment>
<comment type="similarity">
    <text evidence="1">Belongs to the RNase Z family.</text>
</comment>
<protein>
    <recommendedName>
        <fullName evidence="1">Ribonuclease Z</fullName>
        <shortName evidence="1">RNase Z</shortName>
        <ecNumber evidence="1">3.1.26.11</ecNumber>
    </recommendedName>
    <alternativeName>
        <fullName evidence="1">tRNA 3 endonuclease</fullName>
    </alternativeName>
    <alternativeName>
        <fullName evidence="1">tRNase Z</fullName>
    </alternativeName>
</protein>
<name>RNZ_METAC</name>